<evidence type="ECO:0000255" key="1">
    <source>
        <dbReference type="HAMAP-Rule" id="MF_01274"/>
    </source>
</evidence>
<gene>
    <name evidence="1" type="primary">coaX</name>
    <name type="ordered locus">Geob_2385</name>
</gene>
<protein>
    <recommendedName>
        <fullName evidence="1">Type III pantothenate kinase</fullName>
        <ecNumber evidence="1">2.7.1.33</ecNumber>
    </recommendedName>
    <alternativeName>
        <fullName evidence="1">PanK-III</fullName>
    </alternativeName>
    <alternativeName>
        <fullName evidence="1">Pantothenic acid kinase</fullName>
    </alternativeName>
</protein>
<feature type="chain" id="PRO_1000165197" description="Type III pantothenate kinase">
    <location>
        <begin position="1"/>
        <end position="256"/>
    </location>
</feature>
<feature type="active site" description="Proton acceptor" evidence="1">
    <location>
        <position position="109"/>
    </location>
</feature>
<feature type="binding site" evidence="1">
    <location>
        <begin position="6"/>
        <end position="13"/>
    </location>
    <ligand>
        <name>ATP</name>
        <dbReference type="ChEBI" id="CHEBI:30616"/>
    </ligand>
</feature>
<feature type="binding site" evidence="1">
    <location>
        <position position="100"/>
    </location>
    <ligand>
        <name>substrate</name>
    </ligand>
</feature>
<feature type="binding site" evidence="1">
    <location>
        <begin position="107"/>
        <end position="110"/>
    </location>
    <ligand>
        <name>substrate</name>
    </ligand>
</feature>
<feature type="binding site" evidence="1">
    <location>
        <position position="129"/>
    </location>
    <ligand>
        <name>K(+)</name>
        <dbReference type="ChEBI" id="CHEBI:29103"/>
    </ligand>
</feature>
<feature type="binding site" evidence="1">
    <location>
        <position position="132"/>
    </location>
    <ligand>
        <name>ATP</name>
        <dbReference type="ChEBI" id="CHEBI:30616"/>
    </ligand>
</feature>
<feature type="binding site" evidence="1">
    <location>
        <position position="184"/>
    </location>
    <ligand>
        <name>substrate</name>
    </ligand>
</feature>
<proteinExistence type="inferred from homology"/>
<name>COAX_GEODF</name>
<comment type="function">
    <text evidence="1">Catalyzes the phosphorylation of pantothenate (Pan), the first step in CoA biosynthesis.</text>
</comment>
<comment type="catalytic activity">
    <reaction evidence="1">
        <text>(R)-pantothenate + ATP = (R)-4'-phosphopantothenate + ADP + H(+)</text>
        <dbReference type="Rhea" id="RHEA:16373"/>
        <dbReference type="ChEBI" id="CHEBI:10986"/>
        <dbReference type="ChEBI" id="CHEBI:15378"/>
        <dbReference type="ChEBI" id="CHEBI:29032"/>
        <dbReference type="ChEBI" id="CHEBI:30616"/>
        <dbReference type="ChEBI" id="CHEBI:456216"/>
        <dbReference type="EC" id="2.7.1.33"/>
    </reaction>
</comment>
<comment type="cofactor">
    <cofactor evidence="1">
        <name>NH4(+)</name>
        <dbReference type="ChEBI" id="CHEBI:28938"/>
    </cofactor>
    <cofactor evidence="1">
        <name>K(+)</name>
        <dbReference type="ChEBI" id="CHEBI:29103"/>
    </cofactor>
    <text evidence="1">A monovalent cation. Ammonium or potassium.</text>
</comment>
<comment type="pathway">
    <text evidence="1">Cofactor biosynthesis; coenzyme A biosynthesis; CoA from (R)-pantothenate: step 1/5.</text>
</comment>
<comment type="subunit">
    <text evidence="1">Homodimer.</text>
</comment>
<comment type="subcellular location">
    <subcellularLocation>
        <location evidence="1">Cytoplasm</location>
    </subcellularLocation>
</comment>
<comment type="similarity">
    <text evidence="1">Belongs to the type III pantothenate kinase family.</text>
</comment>
<keyword id="KW-0067">ATP-binding</keyword>
<keyword id="KW-0173">Coenzyme A biosynthesis</keyword>
<keyword id="KW-0963">Cytoplasm</keyword>
<keyword id="KW-0418">Kinase</keyword>
<keyword id="KW-0479">Metal-binding</keyword>
<keyword id="KW-0547">Nucleotide-binding</keyword>
<keyword id="KW-0630">Potassium</keyword>
<keyword id="KW-1185">Reference proteome</keyword>
<keyword id="KW-0808">Transferase</keyword>
<reference key="1">
    <citation type="submission" date="2009-01" db="EMBL/GenBank/DDBJ databases">
        <title>Complete sequence of Geobacter sp. FRC-32.</title>
        <authorList>
            <consortium name="US DOE Joint Genome Institute"/>
            <person name="Lucas S."/>
            <person name="Copeland A."/>
            <person name="Lapidus A."/>
            <person name="Glavina del Rio T."/>
            <person name="Dalin E."/>
            <person name="Tice H."/>
            <person name="Bruce D."/>
            <person name="Goodwin L."/>
            <person name="Pitluck S."/>
            <person name="Saunders E."/>
            <person name="Brettin T."/>
            <person name="Detter J.C."/>
            <person name="Han C."/>
            <person name="Larimer F."/>
            <person name="Land M."/>
            <person name="Hauser L."/>
            <person name="Kyrpides N."/>
            <person name="Ovchinnikova G."/>
            <person name="Kostka J."/>
            <person name="Richardson P."/>
        </authorList>
    </citation>
    <scope>NUCLEOTIDE SEQUENCE [LARGE SCALE GENOMIC DNA]</scope>
    <source>
        <strain>DSM 22248 / JCM 15807 / FRC-32</strain>
    </source>
</reference>
<sequence>MLLVIDVGNSNIVLGIYDGDSLVRDWRVSTDKSKTTDEYGILVHELFRLAGIDFSRITDIIISSVVPTLTGVLEKLSLQYFDFKPYVVGPGIKTGMSIHYDNPKEVGADRIVNAVAGYEKHHTALIIVDFGTATTFDYVNKRGEYCGGAIAPGLMISMEALFQKASKLPRVEITKPPAIVAKNTVNSMQAGIFYGYVGLVDGIVTRMKGEGKENPKVIATGGLAGLIAPESTTIEEVDEYLTLEGLRILYQRNRES</sequence>
<accession>B9LZI6</accession>
<dbReference type="EC" id="2.7.1.33" evidence="1"/>
<dbReference type="EMBL" id="CP001390">
    <property type="protein sequence ID" value="ACM20739.1"/>
    <property type="molecule type" value="Genomic_DNA"/>
</dbReference>
<dbReference type="RefSeq" id="WP_012647468.1">
    <property type="nucleotide sequence ID" value="NC_011979.1"/>
</dbReference>
<dbReference type="SMR" id="B9LZI6"/>
<dbReference type="STRING" id="316067.Geob_2385"/>
<dbReference type="KEGG" id="geo:Geob_2385"/>
<dbReference type="eggNOG" id="COG1521">
    <property type="taxonomic scope" value="Bacteria"/>
</dbReference>
<dbReference type="HOGENOM" id="CLU_066627_1_0_7"/>
<dbReference type="OrthoDB" id="9804707at2"/>
<dbReference type="UniPathway" id="UPA00241">
    <property type="reaction ID" value="UER00352"/>
</dbReference>
<dbReference type="Proteomes" id="UP000007721">
    <property type="component" value="Chromosome"/>
</dbReference>
<dbReference type="GO" id="GO:0005737">
    <property type="term" value="C:cytoplasm"/>
    <property type="evidence" value="ECO:0007669"/>
    <property type="project" value="UniProtKB-SubCell"/>
</dbReference>
<dbReference type="GO" id="GO:0005524">
    <property type="term" value="F:ATP binding"/>
    <property type="evidence" value="ECO:0007669"/>
    <property type="project" value="UniProtKB-UniRule"/>
</dbReference>
<dbReference type="GO" id="GO:0046872">
    <property type="term" value="F:metal ion binding"/>
    <property type="evidence" value="ECO:0007669"/>
    <property type="project" value="UniProtKB-KW"/>
</dbReference>
<dbReference type="GO" id="GO:0004594">
    <property type="term" value="F:pantothenate kinase activity"/>
    <property type="evidence" value="ECO:0007669"/>
    <property type="project" value="UniProtKB-UniRule"/>
</dbReference>
<dbReference type="GO" id="GO:0015937">
    <property type="term" value="P:coenzyme A biosynthetic process"/>
    <property type="evidence" value="ECO:0007669"/>
    <property type="project" value="UniProtKB-UniRule"/>
</dbReference>
<dbReference type="CDD" id="cd24015">
    <property type="entry name" value="ASKHA_NBD_PanK-III"/>
    <property type="match status" value="1"/>
</dbReference>
<dbReference type="Gene3D" id="3.30.420.40">
    <property type="match status" value="2"/>
</dbReference>
<dbReference type="HAMAP" id="MF_01274">
    <property type="entry name" value="Pantothen_kinase_3"/>
    <property type="match status" value="1"/>
</dbReference>
<dbReference type="InterPro" id="IPR043129">
    <property type="entry name" value="ATPase_NBD"/>
</dbReference>
<dbReference type="InterPro" id="IPR004619">
    <property type="entry name" value="Type_III_PanK"/>
</dbReference>
<dbReference type="NCBIfam" id="TIGR00671">
    <property type="entry name" value="baf"/>
    <property type="match status" value="1"/>
</dbReference>
<dbReference type="NCBIfam" id="NF009847">
    <property type="entry name" value="PRK13318.1-5"/>
    <property type="match status" value="1"/>
</dbReference>
<dbReference type="NCBIfam" id="NF009848">
    <property type="entry name" value="PRK13318.1-6"/>
    <property type="match status" value="1"/>
</dbReference>
<dbReference type="NCBIfam" id="NF009855">
    <property type="entry name" value="PRK13321.1"/>
    <property type="match status" value="1"/>
</dbReference>
<dbReference type="PANTHER" id="PTHR34265">
    <property type="entry name" value="TYPE III PANTOTHENATE KINASE"/>
    <property type="match status" value="1"/>
</dbReference>
<dbReference type="PANTHER" id="PTHR34265:SF1">
    <property type="entry name" value="TYPE III PANTOTHENATE KINASE"/>
    <property type="match status" value="1"/>
</dbReference>
<dbReference type="Pfam" id="PF03309">
    <property type="entry name" value="Pan_kinase"/>
    <property type="match status" value="1"/>
</dbReference>
<dbReference type="SUPFAM" id="SSF53067">
    <property type="entry name" value="Actin-like ATPase domain"/>
    <property type="match status" value="2"/>
</dbReference>
<organism>
    <name type="scientific">Geotalea daltonii (strain DSM 22248 / JCM 15807 / FRC-32)</name>
    <name type="common">Geobacter daltonii</name>
    <dbReference type="NCBI Taxonomy" id="316067"/>
    <lineage>
        <taxon>Bacteria</taxon>
        <taxon>Pseudomonadati</taxon>
        <taxon>Thermodesulfobacteriota</taxon>
        <taxon>Desulfuromonadia</taxon>
        <taxon>Geobacterales</taxon>
        <taxon>Geobacteraceae</taxon>
        <taxon>Geotalea</taxon>
    </lineage>
</organism>